<proteinExistence type="inferred from homology"/>
<feature type="chain" id="PRO_0000171428" description="tRNA (guanine-N(7)-)-methyltransferase">
    <location>
        <begin position="1"/>
        <end position="239"/>
    </location>
</feature>
<feature type="region of interest" description="Interaction with RNA" evidence="2">
    <location>
        <begin position="150"/>
        <end position="155"/>
    </location>
</feature>
<feature type="active site" evidence="1">
    <location>
        <position position="144"/>
    </location>
</feature>
<feature type="binding site" evidence="2">
    <location>
        <position position="69"/>
    </location>
    <ligand>
        <name>S-adenosyl-L-methionine</name>
        <dbReference type="ChEBI" id="CHEBI:59789"/>
    </ligand>
</feature>
<feature type="binding site" evidence="2">
    <location>
        <position position="94"/>
    </location>
    <ligand>
        <name>S-adenosyl-L-methionine</name>
        <dbReference type="ChEBI" id="CHEBI:59789"/>
    </ligand>
</feature>
<feature type="binding site" evidence="2">
    <location>
        <position position="121"/>
    </location>
    <ligand>
        <name>S-adenosyl-L-methionine</name>
        <dbReference type="ChEBI" id="CHEBI:59789"/>
    </ligand>
</feature>
<feature type="binding site" evidence="2">
    <location>
        <position position="144"/>
    </location>
    <ligand>
        <name>S-adenosyl-L-methionine</name>
        <dbReference type="ChEBI" id="CHEBI:59789"/>
    </ligand>
</feature>
<feature type="binding site" evidence="2">
    <location>
        <position position="148"/>
    </location>
    <ligand>
        <name>substrate</name>
    </ligand>
</feature>
<feature type="binding site" evidence="2">
    <location>
        <position position="180"/>
    </location>
    <ligand>
        <name>substrate</name>
    </ligand>
</feature>
<feature type="binding site" evidence="2">
    <location>
        <begin position="217"/>
        <end position="220"/>
    </location>
    <ligand>
        <name>substrate</name>
    </ligand>
</feature>
<reference key="1">
    <citation type="journal article" date="2001" name="Nature">
        <title>Genome sequence of Yersinia pestis, the causative agent of plague.</title>
        <authorList>
            <person name="Parkhill J."/>
            <person name="Wren B.W."/>
            <person name="Thomson N.R."/>
            <person name="Titball R.W."/>
            <person name="Holden M.T.G."/>
            <person name="Prentice M.B."/>
            <person name="Sebaihia M."/>
            <person name="James K.D."/>
            <person name="Churcher C.M."/>
            <person name="Mungall K.L."/>
            <person name="Baker S."/>
            <person name="Basham D."/>
            <person name="Bentley S.D."/>
            <person name="Brooks K."/>
            <person name="Cerdeno-Tarraga A.-M."/>
            <person name="Chillingworth T."/>
            <person name="Cronin A."/>
            <person name="Davies R.M."/>
            <person name="Davis P."/>
            <person name="Dougan G."/>
            <person name="Feltwell T."/>
            <person name="Hamlin N."/>
            <person name="Holroyd S."/>
            <person name="Jagels K."/>
            <person name="Karlyshev A.V."/>
            <person name="Leather S."/>
            <person name="Moule S."/>
            <person name="Oyston P.C.F."/>
            <person name="Quail M.A."/>
            <person name="Rutherford K.M."/>
            <person name="Simmonds M."/>
            <person name="Skelton J."/>
            <person name="Stevens K."/>
            <person name="Whitehead S."/>
            <person name="Barrell B.G."/>
        </authorList>
    </citation>
    <scope>NUCLEOTIDE SEQUENCE [LARGE SCALE GENOMIC DNA]</scope>
    <source>
        <strain>CO-92 / Biovar Orientalis</strain>
    </source>
</reference>
<reference key="2">
    <citation type="journal article" date="2002" name="J. Bacteriol.">
        <title>Genome sequence of Yersinia pestis KIM.</title>
        <authorList>
            <person name="Deng W."/>
            <person name="Burland V."/>
            <person name="Plunkett G. III"/>
            <person name="Boutin A."/>
            <person name="Mayhew G.F."/>
            <person name="Liss P."/>
            <person name="Perna N.T."/>
            <person name="Rose D.J."/>
            <person name="Mau B."/>
            <person name="Zhou S."/>
            <person name="Schwartz D.C."/>
            <person name="Fetherston J.D."/>
            <person name="Lindler L.E."/>
            <person name="Brubaker R.R."/>
            <person name="Plano G.V."/>
            <person name="Straley S.C."/>
            <person name="McDonough K.A."/>
            <person name="Nilles M.L."/>
            <person name="Matson J.S."/>
            <person name="Blattner F.R."/>
            <person name="Perry R.D."/>
        </authorList>
    </citation>
    <scope>NUCLEOTIDE SEQUENCE [LARGE SCALE GENOMIC DNA]</scope>
    <source>
        <strain>KIM10+ / Biovar Mediaevalis</strain>
    </source>
</reference>
<reference key="3">
    <citation type="journal article" date="2004" name="DNA Res.">
        <title>Complete genome sequence of Yersinia pestis strain 91001, an isolate avirulent to humans.</title>
        <authorList>
            <person name="Song Y."/>
            <person name="Tong Z."/>
            <person name="Wang J."/>
            <person name="Wang L."/>
            <person name="Guo Z."/>
            <person name="Han Y."/>
            <person name="Zhang J."/>
            <person name="Pei D."/>
            <person name="Zhou D."/>
            <person name="Qin H."/>
            <person name="Pang X."/>
            <person name="Han Y."/>
            <person name="Zhai J."/>
            <person name="Li M."/>
            <person name="Cui B."/>
            <person name="Qi Z."/>
            <person name="Jin L."/>
            <person name="Dai R."/>
            <person name="Chen F."/>
            <person name="Li S."/>
            <person name="Ye C."/>
            <person name="Du Z."/>
            <person name="Lin W."/>
            <person name="Wang J."/>
            <person name="Yu J."/>
            <person name="Yang H."/>
            <person name="Wang J."/>
            <person name="Huang P."/>
            <person name="Yang R."/>
        </authorList>
    </citation>
    <scope>NUCLEOTIDE SEQUENCE [LARGE SCALE GENOMIC DNA]</scope>
    <source>
        <strain>91001 / Biovar Mediaevalis</strain>
    </source>
</reference>
<sequence length="239" mass="27019">MINDVISPEFDENGRALRRIRSFVRRQGRLTKGQQLALDSYWPVMGVEYQAAPVDLNTLFGREAPIVLEIGFGMGTSLVTMATNNPQQNFLGIEVHSPGVGACLSSAHDAGLSNLRIMCHDAVEVLENMIPEASLDMVQLFFPDPWHKARHNKRRIVQTPFVELVKSKLKVGGVFHMATDWQPYAEHMLEVMSGVSGYLNLSEQNDYVPRPDSRPLTKFELRGQRLGHGVWDLMFERKE</sequence>
<dbReference type="EC" id="2.1.1.33" evidence="2"/>
<dbReference type="EMBL" id="AL590842">
    <property type="protein sequence ID" value="CAL19617.1"/>
    <property type="molecule type" value="Genomic_DNA"/>
</dbReference>
<dbReference type="EMBL" id="AE009952">
    <property type="protein sequence ID" value="AAM86888.1"/>
    <property type="molecule type" value="Genomic_DNA"/>
</dbReference>
<dbReference type="EMBL" id="AE017042">
    <property type="protein sequence ID" value="AAS63645.1"/>
    <property type="molecule type" value="Genomic_DNA"/>
</dbReference>
<dbReference type="PIR" id="AG0116">
    <property type="entry name" value="AG0116"/>
</dbReference>
<dbReference type="RefSeq" id="WP_002209991.1">
    <property type="nucleotide sequence ID" value="NZ_WUCM01000030.1"/>
</dbReference>
<dbReference type="RefSeq" id="YP_002345997.1">
    <property type="nucleotide sequence ID" value="NC_003143.1"/>
</dbReference>
<dbReference type="SMR" id="Q8ZHE9"/>
<dbReference type="STRING" id="214092.YPO0951"/>
<dbReference type="PaxDb" id="214092-YPO0951"/>
<dbReference type="DNASU" id="1148285"/>
<dbReference type="EnsemblBacteria" id="AAS63645">
    <property type="protein sequence ID" value="AAS63645"/>
    <property type="gene ID" value="YP_3490"/>
</dbReference>
<dbReference type="GeneID" id="57973690"/>
<dbReference type="KEGG" id="ype:YPO0951"/>
<dbReference type="KEGG" id="ypk:y3338"/>
<dbReference type="KEGG" id="ypm:YP_3490"/>
<dbReference type="PATRIC" id="fig|214092.21.peg.1230"/>
<dbReference type="eggNOG" id="COG0220">
    <property type="taxonomic scope" value="Bacteria"/>
</dbReference>
<dbReference type="HOGENOM" id="CLU_050910_0_1_6"/>
<dbReference type="OMA" id="PDPWHKS"/>
<dbReference type="OrthoDB" id="9802090at2"/>
<dbReference type="UniPathway" id="UPA00989"/>
<dbReference type="Proteomes" id="UP000000815">
    <property type="component" value="Chromosome"/>
</dbReference>
<dbReference type="Proteomes" id="UP000001019">
    <property type="component" value="Chromosome"/>
</dbReference>
<dbReference type="Proteomes" id="UP000002490">
    <property type="component" value="Chromosome"/>
</dbReference>
<dbReference type="GO" id="GO:0043527">
    <property type="term" value="C:tRNA methyltransferase complex"/>
    <property type="evidence" value="ECO:0000318"/>
    <property type="project" value="GO_Central"/>
</dbReference>
<dbReference type="GO" id="GO:0008176">
    <property type="term" value="F:tRNA (guanine(46)-N7)-methyltransferase activity"/>
    <property type="evidence" value="ECO:0000318"/>
    <property type="project" value="GO_Central"/>
</dbReference>
<dbReference type="GO" id="GO:0036265">
    <property type="term" value="P:RNA (guanine-N7)-methylation"/>
    <property type="evidence" value="ECO:0000318"/>
    <property type="project" value="GO_Central"/>
</dbReference>
<dbReference type="GO" id="GO:0030488">
    <property type="term" value="P:tRNA methylation"/>
    <property type="evidence" value="ECO:0000318"/>
    <property type="project" value="GO_Central"/>
</dbReference>
<dbReference type="FunFam" id="3.40.50.150:FF:000024">
    <property type="entry name" value="tRNA (guanine-N(7)-)-methyltransferase"/>
    <property type="match status" value="1"/>
</dbReference>
<dbReference type="Gene3D" id="3.40.50.150">
    <property type="entry name" value="Vaccinia Virus protein VP39"/>
    <property type="match status" value="1"/>
</dbReference>
<dbReference type="HAMAP" id="MF_01057">
    <property type="entry name" value="tRNA_methyltr_TrmB"/>
    <property type="match status" value="1"/>
</dbReference>
<dbReference type="InterPro" id="IPR029063">
    <property type="entry name" value="SAM-dependent_MTases_sf"/>
</dbReference>
<dbReference type="InterPro" id="IPR003358">
    <property type="entry name" value="tRNA_(Gua-N-7)_MeTrfase_Trmb"/>
</dbReference>
<dbReference type="InterPro" id="IPR055361">
    <property type="entry name" value="tRNA_methyltr_TrmB_bact"/>
</dbReference>
<dbReference type="NCBIfam" id="TIGR00091">
    <property type="entry name" value="tRNA (guanosine(46)-N7)-methyltransferase TrmB"/>
    <property type="match status" value="1"/>
</dbReference>
<dbReference type="PANTHER" id="PTHR23417">
    <property type="entry name" value="3-DEOXY-D-MANNO-OCTULOSONIC-ACID TRANSFERASE/TRNA GUANINE-N 7 - -METHYLTRANSFERASE"/>
    <property type="match status" value="1"/>
</dbReference>
<dbReference type="PANTHER" id="PTHR23417:SF14">
    <property type="entry name" value="PENTACOTRIPEPTIDE-REPEAT REGION OF PRORP DOMAIN-CONTAINING PROTEIN"/>
    <property type="match status" value="1"/>
</dbReference>
<dbReference type="Pfam" id="PF02390">
    <property type="entry name" value="Methyltransf_4"/>
    <property type="match status" value="1"/>
</dbReference>
<dbReference type="SUPFAM" id="SSF53335">
    <property type="entry name" value="S-adenosyl-L-methionine-dependent methyltransferases"/>
    <property type="match status" value="1"/>
</dbReference>
<dbReference type="PROSITE" id="PS51625">
    <property type="entry name" value="SAM_MT_TRMB"/>
    <property type="match status" value="1"/>
</dbReference>
<gene>
    <name evidence="2" type="primary">trmB</name>
    <name type="ordered locus">YPO0951</name>
    <name type="ordered locus">y3338</name>
    <name type="ordered locus">YP_3490</name>
</gene>
<accession>Q8ZHE9</accession>
<accession>Q0WI91</accession>
<name>TRMB_YERPE</name>
<keyword id="KW-0489">Methyltransferase</keyword>
<keyword id="KW-1185">Reference proteome</keyword>
<keyword id="KW-0949">S-adenosyl-L-methionine</keyword>
<keyword id="KW-0808">Transferase</keyword>
<keyword id="KW-0819">tRNA processing</keyword>
<comment type="function">
    <text evidence="2">Catalyzes the formation of N(7)-methylguanine at position 46 (m7G46) in tRNA.</text>
</comment>
<comment type="catalytic activity">
    <reaction evidence="2">
        <text>guanosine(46) in tRNA + S-adenosyl-L-methionine = N(7)-methylguanosine(46) in tRNA + S-adenosyl-L-homocysteine</text>
        <dbReference type="Rhea" id="RHEA:42708"/>
        <dbReference type="Rhea" id="RHEA-COMP:10188"/>
        <dbReference type="Rhea" id="RHEA-COMP:10189"/>
        <dbReference type="ChEBI" id="CHEBI:57856"/>
        <dbReference type="ChEBI" id="CHEBI:59789"/>
        <dbReference type="ChEBI" id="CHEBI:74269"/>
        <dbReference type="ChEBI" id="CHEBI:74480"/>
        <dbReference type="EC" id="2.1.1.33"/>
    </reaction>
</comment>
<comment type="pathway">
    <text evidence="2">tRNA modification; N(7)-methylguanine-tRNA biosynthesis.</text>
</comment>
<comment type="subunit">
    <text evidence="2">Monomer.</text>
</comment>
<comment type="similarity">
    <text evidence="2">Belongs to the class I-like SAM-binding methyltransferase superfamily. TrmB family.</text>
</comment>
<protein>
    <recommendedName>
        <fullName evidence="2">tRNA (guanine-N(7)-)-methyltransferase</fullName>
        <ecNumber evidence="2">2.1.1.33</ecNumber>
    </recommendedName>
    <alternativeName>
        <fullName evidence="2">tRNA (guanine(46)-N(7))-methyltransferase</fullName>
    </alternativeName>
    <alternativeName>
        <fullName evidence="2">tRNA(m7G46)-methyltransferase</fullName>
    </alternativeName>
</protein>
<organism>
    <name type="scientific">Yersinia pestis</name>
    <dbReference type="NCBI Taxonomy" id="632"/>
    <lineage>
        <taxon>Bacteria</taxon>
        <taxon>Pseudomonadati</taxon>
        <taxon>Pseudomonadota</taxon>
        <taxon>Gammaproteobacteria</taxon>
        <taxon>Enterobacterales</taxon>
        <taxon>Yersiniaceae</taxon>
        <taxon>Yersinia</taxon>
    </lineage>
</organism>
<evidence type="ECO:0000250" key="1"/>
<evidence type="ECO:0000255" key="2">
    <source>
        <dbReference type="HAMAP-Rule" id="MF_01057"/>
    </source>
</evidence>